<keyword id="KW-0002">3D-structure</keyword>
<keyword id="KW-1003">Cell membrane</keyword>
<keyword id="KW-0966">Cell projection</keyword>
<keyword id="KW-0969">Cilium</keyword>
<keyword id="KW-0225">Disease variant</keyword>
<keyword id="KW-0282">Flagellum</keyword>
<keyword id="KW-0407">Ion channel</keyword>
<keyword id="KW-0406">Ion transport</keyword>
<keyword id="KW-0472">Membrane</keyword>
<keyword id="KW-0630">Potassium</keyword>
<keyword id="KW-0631">Potassium channel</keyword>
<keyword id="KW-0633">Potassium transport</keyword>
<keyword id="KW-1267">Proteomics identification</keyword>
<keyword id="KW-1185">Reference proteome</keyword>
<keyword id="KW-0812">Transmembrane</keyword>
<keyword id="KW-1133">Transmembrane helix</keyword>
<keyword id="KW-0813">Transport</keyword>
<keyword id="KW-0851">Voltage-gated channel</keyword>
<name>KCNU1_HUMAN</name>
<organism>
    <name type="scientific">Homo sapiens</name>
    <name type="common">Human</name>
    <dbReference type="NCBI Taxonomy" id="9606"/>
    <lineage>
        <taxon>Eukaryota</taxon>
        <taxon>Metazoa</taxon>
        <taxon>Chordata</taxon>
        <taxon>Craniata</taxon>
        <taxon>Vertebrata</taxon>
        <taxon>Euteleostomi</taxon>
        <taxon>Mammalia</taxon>
        <taxon>Eutheria</taxon>
        <taxon>Euarchontoglires</taxon>
        <taxon>Primates</taxon>
        <taxon>Haplorrhini</taxon>
        <taxon>Catarrhini</taxon>
        <taxon>Hominidae</taxon>
        <taxon>Homo</taxon>
    </lineage>
</organism>
<protein>
    <recommendedName>
        <fullName>Potassium channel subfamily U member 1</fullName>
    </recommendedName>
    <alternativeName>
        <fullName>Calcium-activated potassium channel subunit alpha-3</fullName>
    </alternativeName>
    <alternativeName>
        <fullName>Calcium-activated potassium channel, subfamily M subunit alpha-3</fullName>
    </alternativeName>
    <alternativeName>
        <fullName>KCa5</fullName>
    </alternativeName>
    <alternativeName>
        <fullName>Slowpoke homolog 3</fullName>
    </alternativeName>
</protein>
<reference key="1">
    <citation type="journal article" date="2004" name="Nat. Genet.">
        <title>Complete sequencing and characterization of 21,243 full-length human cDNAs.</title>
        <authorList>
            <person name="Ota T."/>
            <person name="Suzuki Y."/>
            <person name="Nishikawa T."/>
            <person name="Otsuki T."/>
            <person name="Sugiyama T."/>
            <person name="Irie R."/>
            <person name="Wakamatsu A."/>
            <person name="Hayashi K."/>
            <person name="Sato H."/>
            <person name="Nagai K."/>
            <person name="Kimura K."/>
            <person name="Makita H."/>
            <person name="Sekine M."/>
            <person name="Obayashi M."/>
            <person name="Nishi T."/>
            <person name="Shibahara T."/>
            <person name="Tanaka T."/>
            <person name="Ishii S."/>
            <person name="Yamamoto J."/>
            <person name="Saito K."/>
            <person name="Kawai Y."/>
            <person name="Isono Y."/>
            <person name="Nakamura Y."/>
            <person name="Nagahari K."/>
            <person name="Murakami K."/>
            <person name="Yasuda T."/>
            <person name="Iwayanagi T."/>
            <person name="Wagatsuma M."/>
            <person name="Shiratori A."/>
            <person name="Sudo H."/>
            <person name="Hosoiri T."/>
            <person name="Kaku Y."/>
            <person name="Kodaira H."/>
            <person name="Kondo H."/>
            <person name="Sugawara M."/>
            <person name="Takahashi M."/>
            <person name="Kanda K."/>
            <person name="Yokoi T."/>
            <person name="Furuya T."/>
            <person name="Kikkawa E."/>
            <person name="Omura Y."/>
            <person name="Abe K."/>
            <person name="Kamihara K."/>
            <person name="Katsuta N."/>
            <person name="Sato K."/>
            <person name="Tanikawa M."/>
            <person name="Yamazaki M."/>
            <person name="Ninomiya K."/>
            <person name="Ishibashi T."/>
            <person name="Yamashita H."/>
            <person name="Murakawa K."/>
            <person name="Fujimori K."/>
            <person name="Tanai H."/>
            <person name="Kimata M."/>
            <person name="Watanabe M."/>
            <person name="Hiraoka S."/>
            <person name="Chiba Y."/>
            <person name="Ishida S."/>
            <person name="Ono Y."/>
            <person name="Takiguchi S."/>
            <person name="Watanabe S."/>
            <person name="Yosida M."/>
            <person name="Hotuta T."/>
            <person name="Kusano J."/>
            <person name="Kanehori K."/>
            <person name="Takahashi-Fujii A."/>
            <person name="Hara H."/>
            <person name="Tanase T.-O."/>
            <person name="Nomura Y."/>
            <person name="Togiya S."/>
            <person name="Komai F."/>
            <person name="Hara R."/>
            <person name="Takeuchi K."/>
            <person name="Arita M."/>
            <person name="Imose N."/>
            <person name="Musashino K."/>
            <person name="Yuuki H."/>
            <person name="Oshima A."/>
            <person name="Sasaki N."/>
            <person name="Aotsuka S."/>
            <person name="Yoshikawa Y."/>
            <person name="Matsunawa H."/>
            <person name="Ichihara T."/>
            <person name="Shiohata N."/>
            <person name="Sano S."/>
            <person name="Moriya S."/>
            <person name="Momiyama H."/>
            <person name="Satoh N."/>
            <person name="Takami S."/>
            <person name="Terashima Y."/>
            <person name="Suzuki O."/>
            <person name="Nakagawa S."/>
            <person name="Senoh A."/>
            <person name="Mizoguchi H."/>
            <person name="Goto Y."/>
            <person name="Shimizu F."/>
            <person name="Wakebe H."/>
            <person name="Hishigaki H."/>
            <person name="Watanabe T."/>
            <person name="Sugiyama A."/>
            <person name="Takemoto M."/>
            <person name="Kawakami B."/>
            <person name="Yamazaki M."/>
            <person name="Watanabe K."/>
            <person name="Kumagai A."/>
            <person name="Itakura S."/>
            <person name="Fukuzumi Y."/>
            <person name="Fujimori Y."/>
            <person name="Komiyama M."/>
            <person name="Tashiro H."/>
            <person name="Tanigami A."/>
            <person name="Fujiwara T."/>
            <person name="Ono T."/>
            <person name="Yamada K."/>
            <person name="Fujii Y."/>
            <person name="Ozaki K."/>
            <person name="Hirao M."/>
            <person name="Ohmori Y."/>
            <person name="Kawabata A."/>
            <person name="Hikiji T."/>
            <person name="Kobatake N."/>
            <person name="Inagaki H."/>
            <person name="Ikema Y."/>
            <person name="Okamoto S."/>
            <person name="Okitani R."/>
            <person name="Kawakami T."/>
            <person name="Noguchi S."/>
            <person name="Itoh T."/>
            <person name="Shigeta K."/>
            <person name="Senba T."/>
            <person name="Matsumura K."/>
            <person name="Nakajima Y."/>
            <person name="Mizuno T."/>
            <person name="Morinaga M."/>
            <person name="Sasaki M."/>
            <person name="Togashi T."/>
            <person name="Oyama M."/>
            <person name="Hata H."/>
            <person name="Watanabe M."/>
            <person name="Komatsu T."/>
            <person name="Mizushima-Sugano J."/>
            <person name="Satoh T."/>
            <person name="Shirai Y."/>
            <person name="Takahashi Y."/>
            <person name="Nakagawa K."/>
            <person name="Okumura K."/>
            <person name="Nagase T."/>
            <person name="Nomura N."/>
            <person name="Kikuchi H."/>
            <person name="Masuho Y."/>
            <person name="Yamashita R."/>
            <person name="Nakai K."/>
            <person name="Yada T."/>
            <person name="Nakamura Y."/>
            <person name="Ohara O."/>
            <person name="Isogai T."/>
            <person name="Sugano S."/>
        </authorList>
    </citation>
    <scope>NUCLEOTIDE SEQUENCE [LARGE SCALE MRNA]</scope>
    <scope>VARIANT SER-916</scope>
    <source>
        <tissue>Testis</tissue>
    </source>
</reference>
<reference key="2">
    <citation type="journal article" date="2006" name="Nature">
        <title>DNA sequence and analysis of human chromosome 8.</title>
        <authorList>
            <person name="Nusbaum C."/>
            <person name="Mikkelsen T.S."/>
            <person name="Zody M.C."/>
            <person name="Asakawa S."/>
            <person name="Taudien S."/>
            <person name="Garber M."/>
            <person name="Kodira C.D."/>
            <person name="Schueler M.G."/>
            <person name="Shimizu A."/>
            <person name="Whittaker C.A."/>
            <person name="Chang J.L."/>
            <person name="Cuomo C.A."/>
            <person name="Dewar K."/>
            <person name="FitzGerald M.G."/>
            <person name="Yang X."/>
            <person name="Allen N.R."/>
            <person name="Anderson S."/>
            <person name="Asakawa T."/>
            <person name="Blechschmidt K."/>
            <person name="Bloom T."/>
            <person name="Borowsky M.L."/>
            <person name="Butler J."/>
            <person name="Cook A."/>
            <person name="Corum B."/>
            <person name="DeArellano K."/>
            <person name="DeCaprio D."/>
            <person name="Dooley K.T."/>
            <person name="Dorris L. III"/>
            <person name="Engels R."/>
            <person name="Gloeckner G."/>
            <person name="Hafez N."/>
            <person name="Hagopian D.S."/>
            <person name="Hall J.L."/>
            <person name="Ishikawa S.K."/>
            <person name="Jaffe D.B."/>
            <person name="Kamat A."/>
            <person name="Kudoh J."/>
            <person name="Lehmann R."/>
            <person name="Lokitsang T."/>
            <person name="Macdonald P."/>
            <person name="Major J.E."/>
            <person name="Matthews C.D."/>
            <person name="Mauceli E."/>
            <person name="Menzel U."/>
            <person name="Mihalev A.H."/>
            <person name="Minoshima S."/>
            <person name="Murayama Y."/>
            <person name="Naylor J.W."/>
            <person name="Nicol R."/>
            <person name="Nguyen C."/>
            <person name="O'Leary S.B."/>
            <person name="O'Neill K."/>
            <person name="Parker S.C.J."/>
            <person name="Polley A."/>
            <person name="Raymond C.K."/>
            <person name="Reichwald K."/>
            <person name="Rodriguez J."/>
            <person name="Sasaki T."/>
            <person name="Schilhabel M."/>
            <person name="Siddiqui R."/>
            <person name="Smith C.L."/>
            <person name="Sneddon T.P."/>
            <person name="Talamas J.A."/>
            <person name="Tenzin P."/>
            <person name="Topham K."/>
            <person name="Venkataraman V."/>
            <person name="Wen G."/>
            <person name="Yamazaki S."/>
            <person name="Young S.K."/>
            <person name="Zeng Q."/>
            <person name="Zimmer A.R."/>
            <person name="Rosenthal A."/>
            <person name="Birren B.W."/>
            <person name="Platzer M."/>
            <person name="Shimizu N."/>
            <person name="Lander E.S."/>
        </authorList>
    </citation>
    <scope>NUCLEOTIDE SEQUENCE [LARGE SCALE GENOMIC DNA]</scope>
</reference>
<reference key="3">
    <citation type="journal article" date="1998" name="J. Biol. Chem.">
        <title>Slo3, a novel pH-sensitive K+ channel from mammalian spermatocytes.</title>
        <authorList>
            <person name="Schreiber M."/>
            <person name="Wei A."/>
            <person name="Yuan A."/>
            <person name="Gaut J."/>
            <person name="Saito M."/>
            <person name="Salkoff L."/>
        </authorList>
    </citation>
    <scope>FUNCTION</scope>
    <scope>TISSUE SPECIFICITY</scope>
</reference>
<reference key="4">
    <citation type="journal article" date="2012" name="Proc. Natl. Acad. Sci. U.S.A.">
        <title>Functional and structural analysis of the human SLO3 pH- and voltage-gated K+ channel.</title>
        <authorList>
            <person name="Leonetti M.D."/>
            <person name="Yuan P."/>
            <person name="Hsiung Y."/>
            <person name="Mackinnon R."/>
        </authorList>
    </citation>
    <scope>X-RAY CRYSTALLOGRAPHY (3.4 ANGSTROMS) OF 330-1063</scope>
    <scope>FUNCTION</scope>
    <scope>TRANSPORTER ACTIVITY</scope>
    <scope>SUBUNIT</scope>
    <scope>ACTIVITY REGULATION</scope>
</reference>
<reference key="5">
    <citation type="journal article" date="2014" name="Elife">
        <title>The Ca2+-activated K+ current of human sperm is mediated by Slo3.</title>
        <authorList>
            <person name="Brenker C."/>
            <person name="Zhou Y."/>
            <person name="Mueller A."/>
            <person name="Echeverry F.A."/>
            <person name="Troetschel C."/>
            <person name="Poetsch A."/>
            <person name="Xia X.M."/>
            <person name="Boenigk W."/>
            <person name="Lingle C.J."/>
            <person name="Kaupp U.B."/>
            <person name="Struenker T."/>
        </authorList>
    </citation>
    <scope>FUNCTION</scope>
    <scope>TRANSPORTER ACTIVITY</scope>
    <scope>ACTIVITY REGULATION</scope>
    <scope>SUBCELLULAR LOCATION</scope>
</reference>
<reference key="6">
    <citation type="journal article" date="2023" name="Proc. Natl. Acad. Sci. U.S.A.">
        <title>A selective inhibitor of the sperm-specific potassium channel SLO3 impairs human sperm function.</title>
        <authorList>
            <person name="Lyon M."/>
            <person name="Li P."/>
            <person name="Ferreira J.J."/>
            <person name="Lazarenko R.M."/>
            <person name="Kharade S.V."/>
            <person name="Kramer M."/>
            <person name="McClenahan S.J."/>
            <person name="Days E."/>
            <person name="Bauer J.A."/>
            <person name="Spitznagel B.D."/>
            <person name="Weaver C.D."/>
            <person name="Borrego Alvarez A."/>
            <person name="Puga Molina L.C."/>
            <person name="Lybaert P."/>
            <person name="Khambekar S."/>
            <person name="Liu A."/>
            <person name="Lindsley C.W."/>
            <person name="Denton J."/>
            <person name="Santi C.M."/>
        </authorList>
    </citation>
    <scope>FUNCTION</scope>
    <scope>ACTIVITY REGULATION</scope>
</reference>
<reference key="7">
    <citation type="journal article" date="2024" name="Biol. Reprod.">
        <title>LRRC52 is likely a functional component of human KSper.</title>
        <authorList>
            <person name="Zhang J."/>
            <person name="Zheng L."/>
            <person name="Chen Y."/>
            <person name="Luo T."/>
            <person name="Zeng X."/>
            <person name="Kang H."/>
        </authorList>
    </citation>
    <scope>FUNCTION</scope>
    <scope>ACTIVITY REGULATION</scope>
    <scope>SUBCELLULAR LOCATION</scope>
</reference>
<reference key="8">
    <citation type="journal article" date="2022" name="Hum. Reprod.">
        <title>Bi-allelic variants in KCNU1 cause impaired acrosome reactions and male infertility.</title>
        <authorList>
            <person name="Liu R."/>
            <person name="Yan Z."/>
            <person name="Fan Y."/>
            <person name="Qu R."/>
            <person name="Chen B."/>
            <person name="Li B."/>
            <person name="Wu L."/>
            <person name="Wu H."/>
            <person name="Mu J."/>
            <person name="Zhao L."/>
            <person name="Wang W."/>
            <person name="Dong J."/>
            <person name="Zeng Y."/>
            <person name="Li Q."/>
            <person name="Wang L."/>
            <person name="Sang Q."/>
            <person name="Zhang Z."/>
            <person name="Kuang Y."/>
        </authorList>
    </citation>
    <scope>INVOLVEMENT IN SPGF79</scope>
    <scope>VARIANT SPGF79 ARG-715</scope>
    <scope>CHARACTERIZATION OF VARIANT SPGF79 ARG-715</scope>
    <scope>FUNCTION</scope>
    <scope>TISSUE SPECIFICITY</scope>
</reference>
<reference key="9">
    <citation type="journal article" date="2022" name="Reprod. Biol. Endocrinol.">
        <title>Homozygous mutation in SLO3 leads to severe asthenoteratozoospermia due to acrosome hypoplasia and mitochondrial sheath malformations.</title>
        <authorList>
            <person name="Lv M."/>
            <person name="Liu C."/>
            <person name="Ma C."/>
            <person name="Yu H."/>
            <person name="Shao Z."/>
            <person name="Gao Y."/>
            <person name="Liu Y."/>
            <person name="Wu H."/>
            <person name="Tang D."/>
            <person name="Tan Q."/>
            <person name="Zhang J."/>
            <person name="Li K."/>
            <person name="Xu C."/>
            <person name="Geng H."/>
            <person name="Zhang J."/>
            <person name="Li H."/>
            <person name="Mao X."/>
            <person name="Ge L."/>
            <person name="Fu F."/>
            <person name="Zhong K."/>
            <person name="Xu Y."/>
            <person name="Tao F."/>
            <person name="Zhou P."/>
            <person name="Wei Z."/>
            <person name="He X."/>
            <person name="Zhang F."/>
            <person name="Cao Y."/>
        </authorList>
    </citation>
    <scope>VARIANT SPGF79 PHE-413</scope>
    <scope>CHARACTERIZATION OF VARIANT SPGF79 PHE-413</scope>
    <scope>FUNCTION</scope>
    <scope>TISSUE SPECIFICITY</scope>
</reference>
<proteinExistence type="evidence at protein level"/>
<sequence length="1149" mass="129543">MFQTKLRNETWEDLPKMSCTTEIQAAFILSSFVTFFSGLIILLIFRLIWRSVKKWQIIKGTGIILELFTSGTIARSHVRSLHFQGQFRDHIEMLLSAQTFVGQVLVILVFVLSIGSLIIYFINSADPVGSCSSYEDKTIPIDLVFNAFFSFYFGLRFMAADDKIKFWLEMNSIVDIFTIPPTFISYYLKSNWLGLRFLRALRLLELPQILQILRAIKTSNSVKFSKLLSIILSTWFTAAGFIHLVENSGDPWLKGRNSQNISYFESIYLVMATTSTVGFGDVVAKTSLGRTFIMFFTLGSLILFANYIPEMVELFANKRKYTSSYEALKGKKFIVVCGNITVDSVTAFLRNFLRDKSGEINTEIVFLGETPPSLELETIFKCYLAYTTFISGSAMKWEDLRRVAVESAEACLIIANPLCSDSHAEDISNIMRVLSIKNYDSTTRIIIQILQSHNKVYLPKIPSWNWDTGDNIICFAELKLGFIAQGCLVPGLCTFLTSLFVEQNKKVMPKQTWKKHFLNSMKNKILTQRLSDDFAGMSFPEVARLCFLKMHLLLIAIEYKSLFTDGFCGLILNPPPQVRIRKNTLGFFIAETPKDVRRALFYCSVCHDDVFIPELITNCGCKSRSRQHITVPSVKRMKKCLKGISSRISGQDSPPRVSASTSSISNFTTRTLQHDVEQDSDQLDSSGMFHWCKPTSLDKVTLKRTGKSKYKFRNHIVACVFGDAHSAPMGLRNFVMPLRASNYTRKELKDIVFIGSLDYLQREWRFLWNFPQIYILPGCALYSGDLHAANIEQCSMCAVLSPPPQPSSNQTLVDTEAIMATLTIGSLQIDSSSDPSPSVSEETPGYTNGHNEKSNCRKVPILTELKNPSNIHFIEQLGGLEGSLQETNLHLSTAFSTGTVFSGSFLDSLLATAFYNYHVLELLQMLVTGGVSSQLEQHLDKDKVYGVADSCTSLLSGRNRCKLGLLSLHETILSDVNPRNTFGQLFCGSLDLFGILCVGLYRIIDEEELNPENKRFVITRPANEFKLLPSDLVFCAIPFSTACYKRNEEFSLQKSYEIVNKASQTTETHSDTNCPPTIDSVTETLYSPVYSYQPRTNSLSFPKQIAWNQSRTNSIISSQIPLGDNAKENERKTSDEVYDEDPFAYSEPL</sequence>
<gene>
    <name evidence="17" type="primary">KCNU1</name>
    <name type="synonym">KCNMA3</name>
    <name type="synonym">KCNMC1</name>
    <name evidence="15" type="synonym">SLO3</name>
</gene>
<dbReference type="EMBL" id="AC124076">
    <property type="status" value="NOT_ANNOTATED_CDS"/>
    <property type="molecule type" value="Genomic_DNA"/>
</dbReference>
<dbReference type="EMBL" id="AK302391">
    <property type="protein sequence ID" value="BAG63706.1"/>
    <property type="molecule type" value="mRNA"/>
</dbReference>
<dbReference type="CCDS" id="CCDS55220.1"/>
<dbReference type="RefSeq" id="NP_001027006.2">
    <property type="nucleotide sequence ID" value="NM_001031836.3"/>
</dbReference>
<dbReference type="PDB" id="4HPF">
    <property type="method" value="X-ray"/>
    <property type="resolution" value="3.40 A"/>
    <property type="chains" value="A/B=330-1062"/>
</dbReference>
<dbReference type="PDBsum" id="4HPF"/>
<dbReference type="SMR" id="A8MYU2"/>
<dbReference type="DIP" id="DIP-60091N"/>
<dbReference type="FunCoup" id="A8MYU2">
    <property type="interactions" value="252"/>
</dbReference>
<dbReference type="STRING" id="9606.ENSP00000382770"/>
<dbReference type="ChEMBL" id="CHEMBL4524132"/>
<dbReference type="GlyCosmos" id="A8MYU2">
    <property type="glycosylation" value="1 site, 1 glycan"/>
</dbReference>
<dbReference type="GlyGen" id="A8MYU2">
    <property type="glycosylation" value="2 sites, 4 N-linked glycans (2 sites)"/>
</dbReference>
<dbReference type="iPTMnet" id="A8MYU2"/>
<dbReference type="PhosphoSitePlus" id="A8MYU2"/>
<dbReference type="BioMuta" id="KCNU1"/>
<dbReference type="MassIVE" id="A8MYU2"/>
<dbReference type="PaxDb" id="9606-ENSP00000382770"/>
<dbReference type="PeptideAtlas" id="A8MYU2"/>
<dbReference type="ProteomicsDB" id="2426"/>
<dbReference type="Antibodypedia" id="57826">
    <property type="antibodies" value="75 antibodies from 13 providers"/>
</dbReference>
<dbReference type="DNASU" id="157855"/>
<dbReference type="Ensembl" id="ENST00000399881.8">
    <property type="protein sequence ID" value="ENSP00000382770.3"/>
    <property type="gene ID" value="ENSG00000215262.8"/>
</dbReference>
<dbReference type="GeneID" id="157855"/>
<dbReference type="KEGG" id="hsa:157855"/>
<dbReference type="MANE-Select" id="ENST00000399881.8">
    <property type="protein sequence ID" value="ENSP00000382770.3"/>
    <property type="RefSeq nucleotide sequence ID" value="NM_001031836.3"/>
    <property type="RefSeq protein sequence ID" value="NP_001027006.2"/>
</dbReference>
<dbReference type="UCSC" id="uc010lvw.5">
    <property type="organism name" value="human"/>
</dbReference>
<dbReference type="AGR" id="HGNC:18867"/>
<dbReference type="CTD" id="157855"/>
<dbReference type="DisGeNET" id="157855"/>
<dbReference type="GeneCards" id="KCNU1"/>
<dbReference type="HGNC" id="HGNC:18867">
    <property type="gene designation" value="KCNU1"/>
</dbReference>
<dbReference type="HPA" id="ENSG00000215262">
    <property type="expression patterns" value="Tissue enriched (testis)"/>
</dbReference>
<dbReference type="MalaCards" id="KCNU1"/>
<dbReference type="MIM" id="615215">
    <property type="type" value="gene"/>
</dbReference>
<dbReference type="MIM" id="620196">
    <property type="type" value="phenotype"/>
</dbReference>
<dbReference type="neXtProt" id="NX_A8MYU2"/>
<dbReference type="OpenTargets" id="ENSG00000215262"/>
<dbReference type="PharmGKB" id="PA38727"/>
<dbReference type="VEuPathDB" id="HostDB:ENSG00000215262"/>
<dbReference type="eggNOG" id="KOG1420">
    <property type="taxonomic scope" value="Eukaryota"/>
</dbReference>
<dbReference type="GeneTree" id="ENSGT00940000161817"/>
<dbReference type="InParanoid" id="A8MYU2"/>
<dbReference type="OMA" id="NWNTGDN"/>
<dbReference type="OrthoDB" id="10035564at2759"/>
<dbReference type="PAN-GO" id="A8MYU2">
    <property type="GO annotations" value="1 GO annotation based on evolutionary models"/>
</dbReference>
<dbReference type="PhylomeDB" id="A8MYU2"/>
<dbReference type="TreeFam" id="TF314283"/>
<dbReference type="PathwayCommons" id="A8MYU2"/>
<dbReference type="Reactome" id="R-HSA-1300642">
    <property type="pathway name" value="Sperm Motility And Taxes"/>
</dbReference>
<dbReference type="SignaLink" id="A8MYU2"/>
<dbReference type="BioGRID-ORCS" id="157855">
    <property type="hits" value="9 hits in 1147 CRISPR screens"/>
</dbReference>
<dbReference type="ChiTaRS" id="KCNU1">
    <property type="organism name" value="human"/>
</dbReference>
<dbReference type="EvolutionaryTrace" id="A8MYU2"/>
<dbReference type="GeneWiki" id="KCNU1"/>
<dbReference type="GenomeRNAi" id="157855"/>
<dbReference type="Pharos" id="A8MYU2">
    <property type="development level" value="Tbio"/>
</dbReference>
<dbReference type="PRO" id="PR:A8MYU2"/>
<dbReference type="Proteomes" id="UP000005640">
    <property type="component" value="Chromosome 8"/>
</dbReference>
<dbReference type="RNAct" id="A8MYU2">
    <property type="molecule type" value="protein"/>
</dbReference>
<dbReference type="Bgee" id="ENSG00000215262">
    <property type="expression patterns" value="Expressed in sperm and 52 other cell types or tissues"/>
</dbReference>
<dbReference type="ExpressionAtlas" id="A8MYU2">
    <property type="expression patterns" value="baseline and differential"/>
</dbReference>
<dbReference type="GO" id="GO:0016020">
    <property type="term" value="C:membrane"/>
    <property type="evidence" value="ECO:0000318"/>
    <property type="project" value="GO_Central"/>
</dbReference>
<dbReference type="GO" id="GO:0034702">
    <property type="term" value="C:monoatomic ion channel complex"/>
    <property type="evidence" value="ECO:0007669"/>
    <property type="project" value="UniProtKB-KW"/>
</dbReference>
<dbReference type="GO" id="GO:0005886">
    <property type="term" value="C:plasma membrane"/>
    <property type="evidence" value="ECO:0000250"/>
    <property type="project" value="UniProtKB"/>
</dbReference>
<dbReference type="GO" id="GO:0036126">
    <property type="term" value="C:sperm flagellum"/>
    <property type="evidence" value="ECO:0000314"/>
    <property type="project" value="UniProtKB"/>
</dbReference>
<dbReference type="GO" id="GO:0005267">
    <property type="term" value="F:potassium channel activity"/>
    <property type="evidence" value="ECO:0000315"/>
    <property type="project" value="UniProtKB"/>
</dbReference>
<dbReference type="GO" id="GO:0071805">
    <property type="term" value="P:potassium ion transmembrane transport"/>
    <property type="evidence" value="ECO:0000314"/>
    <property type="project" value="UniProtKB"/>
</dbReference>
<dbReference type="GO" id="GO:0022414">
    <property type="term" value="P:reproductive process"/>
    <property type="evidence" value="ECO:0000315"/>
    <property type="project" value="UniProtKB"/>
</dbReference>
<dbReference type="FunFam" id="3.40.50.720:FF:000005">
    <property type="entry name" value="calcium-activated potassium channel subunit alpha-1 isoform X6"/>
    <property type="match status" value="1"/>
</dbReference>
<dbReference type="FunFam" id="1.10.287.70:FF:000130">
    <property type="entry name" value="Potassium calcium-activated channel subfamily U member 1"/>
    <property type="match status" value="1"/>
</dbReference>
<dbReference type="FunFam" id="3.40.50.720:FF:000403">
    <property type="entry name" value="Potassium calcium-activated channel subfamily U member 1"/>
    <property type="match status" value="1"/>
</dbReference>
<dbReference type="Gene3D" id="1.10.287.70">
    <property type="match status" value="1"/>
</dbReference>
<dbReference type="Gene3D" id="3.40.50.720">
    <property type="entry name" value="NAD(P)-binding Rossmann-like Domain"/>
    <property type="match status" value="2"/>
</dbReference>
<dbReference type="InterPro" id="IPR005821">
    <property type="entry name" value="Ion_trans_dom"/>
</dbReference>
<dbReference type="InterPro" id="IPR003929">
    <property type="entry name" value="K_chnl_BK_asu"/>
</dbReference>
<dbReference type="InterPro" id="IPR047871">
    <property type="entry name" value="K_chnl_Slo-like"/>
</dbReference>
<dbReference type="InterPro" id="IPR003148">
    <property type="entry name" value="RCK_N"/>
</dbReference>
<dbReference type="InterPro" id="IPR048735">
    <property type="entry name" value="Slowpoke-like_C"/>
</dbReference>
<dbReference type="PANTHER" id="PTHR10027">
    <property type="entry name" value="CALCIUM-ACTIVATED POTASSIUM CHANNEL ALPHA CHAIN"/>
    <property type="match status" value="1"/>
</dbReference>
<dbReference type="PANTHER" id="PTHR10027:SF23">
    <property type="entry name" value="POTASSIUM CHANNEL SUBFAMILY U MEMBER 1"/>
    <property type="match status" value="1"/>
</dbReference>
<dbReference type="Pfam" id="PF03493">
    <property type="entry name" value="BK_channel_a"/>
    <property type="match status" value="1"/>
</dbReference>
<dbReference type="Pfam" id="PF00520">
    <property type="entry name" value="Ion_trans"/>
    <property type="match status" value="1"/>
</dbReference>
<dbReference type="Pfam" id="PF22614">
    <property type="entry name" value="Slo-like_RCK"/>
    <property type="match status" value="2"/>
</dbReference>
<dbReference type="Pfam" id="PF21014">
    <property type="entry name" value="Slowpoke_C"/>
    <property type="match status" value="1"/>
</dbReference>
<dbReference type="PRINTS" id="PR01449">
    <property type="entry name" value="BKCHANNELA"/>
</dbReference>
<dbReference type="SUPFAM" id="SSF81324">
    <property type="entry name" value="Voltage-gated potassium channels"/>
    <property type="match status" value="1"/>
</dbReference>
<dbReference type="PROSITE" id="PS51201">
    <property type="entry name" value="RCK_N"/>
    <property type="match status" value="2"/>
</dbReference>
<accession>A8MYU2</accession>
<accession>B4DYE4</accession>
<feature type="chain" id="PRO_0000349186" description="Potassium channel subfamily U member 1">
    <location>
        <begin position="1"/>
        <end position="1149"/>
    </location>
</feature>
<feature type="topological domain" description="Extracellular" evidence="4">
    <location>
        <begin position="1"/>
        <end position="24"/>
    </location>
</feature>
<feature type="transmembrane region" description="Helical; Name=Segment S0" evidence="4">
    <location>
        <begin position="25"/>
        <end position="45"/>
    </location>
</feature>
<feature type="topological domain" description="Cytoplasmic" evidence="4">
    <location>
        <begin position="46"/>
        <end position="101"/>
    </location>
</feature>
<feature type="transmembrane region" description="Helical; Name=Segment S1" evidence="4">
    <location>
        <begin position="102"/>
        <end position="122"/>
    </location>
</feature>
<feature type="topological domain" description="Extracellular" evidence="4">
    <location>
        <begin position="123"/>
        <end position="138"/>
    </location>
</feature>
<feature type="transmembrane region" description="Helical; Name=Segment S2" evidence="4">
    <location>
        <begin position="139"/>
        <end position="159"/>
    </location>
</feature>
<feature type="topological domain" description="Cytoplasmic" evidence="4">
    <location>
        <begin position="160"/>
        <end position="163"/>
    </location>
</feature>
<feature type="transmembrane region" description="Helical; Name=Segment S3" evidence="4">
    <location>
        <begin position="164"/>
        <end position="184"/>
    </location>
</feature>
<feature type="topological domain" description="Extracellular" evidence="4">
    <location>
        <begin position="185"/>
        <end position="188"/>
    </location>
</feature>
<feature type="transmembrane region" description="Helical; Voltage-sensor; Name=Segment S4" evidence="4">
    <location>
        <begin position="189"/>
        <end position="209"/>
    </location>
</feature>
<feature type="topological domain" description="Cytoplasmic" evidence="4">
    <location>
        <begin position="210"/>
        <end position="226"/>
    </location>
</feature>
<feature type="transmembrane region" description="Helical; Name=Segment S5" evidence="4">
    <location>
        <begin position="227"/>
        <end position="247"/>
    </location>
</feature>
<feature type="topological domain" description="Extracellular" evidence="4">
    <location>
        <begin position="248"/>
        <end position="259"/>
    </location>
</feature>
<feature type="intramembrane region" description="Pore-forming; Name=P region" evidence="4">
    <location>
        <begin position="260"/>
        <end position="282"/>
    </location>
</feature>
<feature type="topological domain" description="Extracellular" evidence="4">
    <location>
        <begin position="283"/>
        <end position="291"/>
    </location>
</feature>
<feature type="transmembrane region" description="Helical; Name=Segment S6" evidence="4">
    <location>
        <begin position="292"/>
        <end position="312"/>
    </location>
</feature>
<feature type="topological domain" description="Cytoplasmic" evidence="4">
    <location>
        <begin position="313"/>
        <end position="1149"/>
    </location>
</feature>
<feature type="domain" description="RCK N-terminal 1" evidence="5">
    <location>
        <begin position="331"/>
        <end position="473"/>
    </location>
</feature>
<feature type="domain" description="RCK N-terminal 2" evidence="5">
    <location>
        <begin position="713"/>
        <end position="884"/>
    </location>
</feature>
<feature type="region of interest" description="Disordered" evidence="6">
    <location>
        <begin position="828"/>
        <end position="854"/>
    </location>
</feature>
<feature type="region of interest" description="Disordered" evidence="6">
    <location>
        <begin position="1118"/>
        <end position="1149"/>
    </location>
</feature>
<feature type="short sequence motif" description="Selectivity for potassium">
    <location>
        <begin position="276"/>
        <end position="279"/>
    </location>
</feature>
<feature type="compositionally biased region" description="Low complexity" evidence="6">
    <location>
        <begin position="830"/>
        <end position="840"/>
    </location>
</feature>
<feature type="compositionally biased region" description="Basic and acidic residues" evidence="6">
    <location>
        <begin position="1125"/>
        <end position="1135"/>
    </location>
</feature>
<feature type="sequence variant" id="VAR_060148" description="In dbSNP:rs1111125.">
    <original>D</original>
    <variation>N</variation>
    <location>
        <position position="175"/>
    </location>
</feature>
<feature type="sequence variant" id="VAR_088020" description="In SPGF79; severely decreased protein abundance in patient sperm; dbSNP:rs377269265." evidence="10">
    <original>I</original>
    <variation>F</variation>
    <location>
        <position position="413"/>
    </location>
</feature>
<feature type="sequence variant" id="VAR_088021" description="In SPGF79; no protein detected in patient sperm; a knockin mouse model recapitulates the phenotype of male infertility." evidence="11">
    <original>H</original>
    <variation>R</variation>
    <location>
        <position position="715"/>
    </location>
</feature>
<feature type="sequence variant" id="VAR_053868" description="In dbSNP:rs28608091.">
    <original>W</original>
    <variation>R</variation>
    <location>
        <position position="768"/>
    </location>
</feature>
<feature type="sequence variant" id="VAR_053869" description="In dbSNP:rs16885577." evidence="7">
    <original>N</original>
    <variation>S</variation>
    <location>
        <position position="916"/>
    </location>
</feature>
<feature type="sequence conflict" description="In Ref. 1; BAG63706." evidence="16" ref="1">
    <original>R</original>
    <variation>Q</variation>
    <location>
        <position position="713"/>
    </location>
</feature>
<feature type="strand" evidence="18">
    <location>
        <begin position="333"/>
        <end position="338"/>
    </location>
</feature>
<feature type="helix" evidence="18">
    <location>
        <begin position="342"/>
        <end position="349"/>
    </location>
</feature>
<feature type="strand" evidence="18">
    <location>
        <begin position="363"/>
        <end position="365"/>
    </location>
</feature>
<feature type="turn" evidence="18">
    <location>
        <begin position="382"/>
        <end position="385"/>
    </location>
</feature>
<feature type="strand" evidence="18">
    <location>
        <begin position="386"/>
        <end position="388"/>
    </location>
</feature>
<feature type="helix" evidence="18">
    <location>
        <begin position="397"/>
        <end position="403"/>
    </location>
</feature>
<feature type="helix" evidence="18">
    <location>
        <begin position="405"/>
        <end position="407"/>
    </location>
</feature>
<feature type="strand" evidence="18">
    <location>
        <begin position="408"/>
        <end position="413"/>
    </location>
</feature>
<feature type="helix" evidence="18">
    <location>
        <begin position="422"/>
        <end position="439"/>
    </location>
</feature>
<feature type="strand" evidence="18">
    <location>
        <begin position="445"/>
        <end position="448"/>
    </location>
</feature>
<feature type="helix" evidence="18">
    <location>
        <begin position="452"/>
        <end position="456"/>
    </location>
</feature>
<feature type="helix" evidence="18">
    <location>
        <begin position="457"/>
        <end position="460"/>
    </location>
</feature>
<feature type="turn" evidence="18">
    <location>
        <begin position="466"/>
        <end position="469"/>
    </location>
</feature>
<feature type="strand" evidence="18">
    <location>
        <begin position="471"/>
        <end position="473"/>
    </location>
</feature>
<feature type="helix" evidence="18">
    <location>
        <begin position="475"/>
        <end position="488"/>
    </location>
</feature>
<feature type="helix" evidence="18">
    <location>
        <begin position="492"/>
        <end position="498"/>
    </location>
</feature>
<feature type="helix" evidence="18">
    <location>
        <begin position="512"/>
        <end position="521"/>
    </location>
</feature>
<feature type="strand" evidence="18">
    <location>
        <begin position="527"/>
        <end position="529"/>
    </location>
</feature>
<feature type="helix" evidence="18">
    <location>
        <begin position="532"/>
        <end position="534"/>
    </location>
</feature>
<feature type="helix" evidence="18">
    <location>
        <begin position="539"/>
        <end position="549"/>
    </location>
</feature>
<feature type="strand" evidence="18">
    <location>
        <begin position="553"/>
        <end position="558"/>
    </location>
</feature>
<feature type="strand" evidence="18">
    <location>
        <begin position="571"/>
        <end position="573"/>
    </location>
</feature>
<feature type="strand" evidence="18">
    <location>
        <begin position="585"/>
        <end position="591"/>
    </location>
</feature>
<feature type="helix" evidence="18">
    <location>
        <begin position="593"/>
        <end position="597"/>
    </location>
</feature>
<feature type="helix" evidence="18">
    <location>
        <begin position="598"/>
        <end position="600"/>
    </location>
</feature>
<feature type="strand" evidence="18">
    <location>
        <begin position="685"/>
        <end position="690"/>
    </location>
</feature>
<feature type="helix" evidence="18">
    <location>
        <begin position="697"/>
        <end position="700"/>
    </location>
</feature>
<feature type="strand" evidence="18">
    <location>
        <begin position="716"/>
        <end position="720"/>
    </location>
</feature>
<feature type="helix" evidence="18">
    <location>
        <begin position="732"/>
        <end position="735"/>
    </location>
</feature>
<feature type="helix" evidence="18">
    <location>
        <begin position="736"/>
        <end position="739"/>
    </location>
</feature>
<feature type="helix" evidence="18">
    <location>
        <begin position="745"/>
        <end position="747"/>
    </location>
</feature>
<feature type="strand" evidence="18">
    <location>
        <begin position="751"/>
        <end position="755"/>
    </location>
</feature>
<feature type="helix" evidence="18">
    <location>
        <begin position="757"/>
        <end position="763"/>
    </location>
</feature>
<feature type="helix" evidence="18">
    <location>
        <begin position="764"/>
        <end position="767"/>
    </location>
</feature>
<feature type="strand" evidence="18">
    <location>
        <begin position="771"/>
        <end position="778"/>
    </location>
</feature>
<feature type="helix" evidence="18">
    <location>
        <begin position="783"/>
        <end position="788"/>
    </location>
</feature>
<feature type="helix" evidence="18">
    <location>
        <begin position="791"/>
        <end position="793"/>
    </location>
</feature>
<feature type="strand" evidence="18">
    <location>
        <begin position="795"/>
        <end position="800"/>
    </location>
</feature>
<feature type="helix" evidence="18">
    <location>
        <begin position="815"/>
        <end position="825"/>
    </location>
</feature>
<feature type="strand" evidence="18">
    <location>
        <begin position="861"/>
        <end position="864"/>
    </location>
</feature>
<feature type="helix" evidence="18">
    <location>
        <begin position="868"/>
        <end position="870"/>
    </location>
</feature>
<feature type="helix" evidence="18">
    <location>
        <begin position="871"/>
        <end position="878"/>
    </location>
</feature>
<feature type="turn" evidence="18">
    <location>
        <begin position="882"/>
        <end position="884"/>
    </location>
</feature>
<feature type="helix" evidence="18">
    <location>
        <begin position="889"/>
        <end position="891"/>
    </location>
</feature>
<feature type="helix" evidence="18">
    <location>
        <begin position="893"/>
        <end position="897"/>
    </location>
</feature>
<feature type="strand" evidence="18">
    <location>
        <begin position="899"/>
        <end position="901"/>
    </location>
</feature>
<feature type="helix" evidence="18">
    <location>
        <begin position="903"/>
        <end position="908"/>
    </location>
</feature>
<feature type="helix" evidence="18">
    <location>
        <begin position="909"/>
        <end position="915"/>
    </location>
</feature>
<feature type="helix" evidence="18">
    <location>
        <begin position="917"/>
        <end position="928"/>
    </location>
</feature>
<feature type="strand" evidence="18">
    <location>
        <begin position="962"/>
        <end position="966"/>
    </location>
</feature>
<feature type="strand" evidence="18">
    <location>
        <begin position="968"/>
        <end position="971"/>
    </location>
</feature>
<feature type="helix" evidence="18">
    <location>
        <begin position="972"/>
        <end position="975"/>
    </location>
</feature>
<feature type="helix" evidence="18">
    <location>
        <begin position="982"/>
        <end position="993"/>
    </location>
</feature>
<feature type="strand" evidence="18">
    <location>
        <begin position="996"/>
        <end position="1003"/>
    </location>
</feature>
<feature type="strand" evidence="18">
    <location>
        <begin position="1015"/>
        <end position="1020"/>
    </location>
</feature>
<feature type="strand" evidence="18">
    <location>
        <begin position="1032"/>
        <end position="1037"/>
    </location>
</feature>
<evidence type="ECO:0000250" key="1"/>
<evidence type="ECO:0000250" key="2">
    <source>
        <dbReference type="UniProtKB" id="O54982"/>
    </source>
</evidence>
<evidence type="ECO:0000250" key="3">
    <source>
        <dbReference type="UniProtKB" id="Q12791"/>
    </source>
</evidence>
<evidence type="ECO:0000255" key="4"/>
<evidence type="ECO:0000255" key="5">
    <source>
        <dbReference type="PROSITE-ProRule" id="PRU00543"/>
    </source>
</evidence>
<evidence type="ECO:0000256" key="6">
    <source>
        <dbReference type="SAM" id="MobiDB-lite"/>
    </source>
</evidence>
<evidence type="ECO:0000269" key="7">
    <source>
    </source>
</evidence>
<evidence type="ECO:0000269" key="8">
    <source>
    </source>
</evidence>
<evidence type="ECO:0000269" key="9">
    <source>
    </source>
</evidence>
<evidence type="ECO:0000269" key="10">
    <source>
    </source>
</evidence>
<evidence type="ECO:0000269" key="11">
    <source>
    </source>
</evidence>
<evidence type="ECO:0000269" key="12">
    <source>
    </source>
</evidence>
<evidence type="ECO:0000269" key="13">
    <source>
    </source>
</evidence>
<evidence type="ECO:0000269" key="14">
    <source>
    </source>
</evidence>
<evidence type="ECO:0000303" key="15">
    <source>
    </source>
</evidence>
<evidence type="ECO:0000305" key="16"/>
<evidence type="ECO:0000312" key="17">
    <source>
        <dbReference type="HGNC" id="HGNC:18867"/>
    </source>
</evidence>
<evidence type="ECO:0007829" key="18">
    <source>
        <dbReference type="PDB" id="4HPF"/>
    </source>
</evidence>
<comment type="function">
    <text evidence="8 9 10 11 12 13 14">Testis-specific potassium channel activated by both intracellular pH and membrane voltage that mediates export of K(+) (PubMed:23129643, PubMed:24670955, PubMed:36649421, PubMed:38267364, PubMed:9452476). Represents the primary spermatozoan K(+) current. The channel underlies a pH-triggered membrane hyperpolarization during the process of sperm capacitation, as sperm encounter the alkaline environment near the ovum in the female reproductive tract, thereby playing an essential for male fertility (PubMed:34980136, PubMed:35551387, PubMed:36649421).</text>
</comment>
<comment type="catalytic activity">
    <reaction evidence="8 9">
        <text>K(+)(in) = K(+)(out)</text>
        <dbReference type="Rhea" id="RHEA:29463"/>
        <dbReference type="ChEBI" id="CHEBI:29103"/>
    </reaction>
</comment>
<comment type="activity regulation">
    <text evidence="8 9 12 13">Regulated by changes in cytosolic pH; activated by alkalization (PubMed:23129643, PubMed:24670955). Activated by intracellular Ca(2+) (PubMed:24670955). Despite strong sequence similarity, human KCNU1 channels are significantly more sensitive to activation by internal Ca(2+) and less pH-sensitive than mouse KCNU1 (PubMed:24670955). VU0546110 acts as a selective inhibitor (PubMed:36649421). The auxiliary subunit LRRC52 shifts the activation of KCNU1 to more negative potentials at a given pH (PubMed:38267364).</text>
</comment>
<comment type="subunit">
    <text evidence="3 13">Homotetramer; which constitutes the activated potassium channel (By similarity). Interacts with LRRC52; this interaction changes channel gating properties, such as shifting gating to more negative potentials at a given pH (PubMed:38267364).</text>
</comment>
<comment type="subcellular location">
    <subcellularLocation>
        <location evidence="2">Cell membrane</location>
        <topology evidence="4">Multi-pass membrane protein</topology>
    </subcellularLocation>
    <subcellularLocation>
        <location evidence="9 13">Cell projection</location>
        <location evidence="9 13">Cilium</location>
        <location evidence="9 13">Flagellum membrane</location>
        <topology evidence="4">Multi-pass membrane protein</topology>
    </subcellularLocation>
</comment>
<comment type="tissue specificity">
    <text evidence="10 11 14">Testis-specific.</text>
</comment>
<comment type="domain">
    <text evidence="1">The S4 segment, which is characterized by a series of positively charged amino acids at every third position, is part of the voltage-sensor.</text>
</comment>
<comment type="domain">
    <text evidence="1">The pore-forming domain (also referred as P region) is imbedded into the membrane, and forms the selectivity filter of the pore. It contains the signature sequence of potassium channels that displays selectivity to potassium (By similarity).</text>
</comment>
<comment type="domain">
    <text evidence="3">The RCK N-terminal domain mediates the homotetramerization, thereby promoting the assembly of monomers into functional potassium channel.</text>
</comment>
<comment type="domain">
    <text evidence="1">The C-terminal cytosolic region confers the pH-dependence.</text>
</comment>
<comment type="disease" evidence="10 11">
    <disease id="DI-06579">
        <name>Spermatogenic failure 79</name>
        <acronym>SPGF79</acronym>
        <description>An autosomal recessive, male infertility disorder characterized by asthenoteratozoospermia with acrosome hypoplasia, disruption of the mitochondrial sheath, and reduced progressive sperm motility. The disorder is due to an abnormal acrosome reaction and impaired membrane potential after capacitation.</description>
        <dbReference type="MIM" id="620196"/>
    </disease>
    <text>The disease is caused by variants affecting the gene represented in this entry.</text>
</comment>
<comment type="similarity">
    <text evidence="16">Belongs to the potassium channel family. Calcium-activated (TC 1.A.1.3) subfamily. KCa5.1/KCNU1 sub-subfamily.</text>
</comment>